<protein>
    <recommendedName>
        <fullName evidence="1">Ribosome hibernation promotion factor</fullName>
        <shortName evidence="1 3">HPF</shortName>
    </recommendedName>
    <alternativeName>
        <fullName evidence="3">Ribosome hibernation-promoting factor</fullName>
    </alternativeName>
</protein>
<keyword id="KW-0963">Cytoplasm</keyword>
<keyword id="KW-0810">Translation regulation</keyword>
<name>HPF_STAA3</name>
<evidence type="ECO:0000255" key="1">
    <source>
        <dbReference type="HAMAP-Rule" id="MF_00839"/>
    </source>
</evidence>
<evidence type="ECO:0000269" key="2">
    <source>
    </source>
</evidence>
<evidence type="ECO:0000303" key="3">
    <source>
    </source>
</evidence>
<evidence type="ECO:0000305" key="4">
    <source>
    </source>
</evidence>
<feature type="chain" id="PRO_0000291320" description="Ribosome hibernation promotion factor">
    <location>
        <begin position="1"/>
        <end position="190"/>
    </location>
</feature>
<feature type="region of interest" description="Required for ribosome-binding" evidence="2">
    <location>
        <begin position="101"/>
        <end position="190"/>
    </location>
</feature>
<feature type="mutagenesis site" description="Decreased dimerization of 70S ribosomes to 100S ribosomes, still binds 70S ribosomes. Loss of ribosome binding; when associated with 84-A--A-87." evidence="2">
    <original>KLER</original>
    <variation>ALEA</variation>
    <location>
        <begin position="27"/>
        <end position="30"/>
    </location>
</feature>
<feature type="mutagenesis site" description="No change in 70S ribosome dimerization." evidence="2">
    <original>A</original>
    <variation>C</variation>
    <location>
        <position position="51"/>
    </location>
</feature>
<feature type="mutagenesis site" description="No change in 70S ribosome dimerization." evidence="2">
    <original>N</original>
    <variation>C</variation>
    <location>
        <position position="71"/>
    </location>
</feature>
<feature type="mutagenesis site" description="Very little dimerization of 70S ribosomes to 100S ribosomes, still binds 70S ribosomes. Loss of ribosome binding; when associated with 27-A--A-30." evidence="2">
    <original>KLER</original>
    <variation>ALEA</variation>
    <location>
        <begin position="84"/>
        <end position="87"/>
    </location>
</feature>
<feature type="mutagenesis site" description="No change in 70S ribosome dimerization." evidence="2">
    <original>L</original>
    <variation>C</variation>
    <location>
        <position position="113"/>
    </location>
</feature>
<dbReference type="EMBL" id="CP000255">
    <property type="protein sequence ID" value="ABD20521.1"/>
    <property type="molecule type" value="Genomic_DNA"/>
</dbReference>
<dbReference type="RefSeq" id="WP_000617735.1">
    <property type="nucleotide sequence ID" value="NZ_CP027476.1"/>
</dbReference>
<dbReference type="SMR" id="Q2FIN9"/>
<dbReference type="KEGG" id="saa:SAUSA300_0736"/>
<dbReference type="HOGENOM" id="CLU_071472_0_3_9"/>
<dbReference type="OMA" id="KYFAMPP"/>
<dbReference type="Proteomes" id="UP000001939">
    <property type="component" value="Chromosome"/>
</dbReference>
<dbReference type="GO" id="GO:0022627">
    <property type="term" value="C:cytosolic small ribosomal subunit"/>
    <property type="evidence" value="ECO:0007669"/>
    <property type="project" value="TreeGrafter"/>
</dbReference>
<dbReference type="GO" id="GO:0043024">
    <property type="term" value="F:ribosomal small subunit binding"/>
    <property type="evidence" value="ECO:0007669"/>
    <property type="project" value="TreeGrafter"/>
</dbReference>
<dbReference type="GO" id="GO:0045900">
    <property type="term" value="P:negative regulation of translational elongation"/>
    <property type="evidence" value="ECO:0007669"/>
    <property type="project" value="TreeGrafter"/>
</dbReference>
<dbReference type="CDD" id="cd00552">
    <property type="entry name" value="RaiA"/>
    <property type="match status" value="1"/>
</dbReference>
<dbReference type="FunFam" id="3.30.160.100:FF:000003">
    <property type="entry name" value="Ribosome hibernation promoting factor"/>
    <property type="match status" value="1"/>
</dbReference>
<dbReference type="FunFam" id="3.30.505.50:FF:000001">
    <property type="entry name" value="Ribosome hibernation promoting factor"/>
    <property type="match status" value="1"/>
</dbReference>
<dbReference type="Gene3D" id="3.30.160.100">
    <property type="entry name" value="Ribosome hibernation promotion factor-like"/>
    <property type="match status" value="1"/>
</dbReference>
<dbReference type="Gene3D" id="3.30.505.50">
    <property type="entry name" value="Sigma 54 modulation/S30EA ribosomal protein, C-terminal domain"/>
    <property type="match status" value="1"/>
</dbReference>
<dbReference type="HAMAP" id="MF_00839">
    <property type="entry name" value="HPF"/>
    <property type="match status" value="1"/>
</dbReference>
<dbReference type="InterPro" id="IPR050574">
    <property type="entry name" value="HPF/YfiA_ribosome-assoc"/>
</dbReference>
<dbReference type="InterPro" id="IPR034694">
    <property type="entry name" value="HPF_long/plastid"/>
</dbReference>
<dbReference type="InterPro" id="IPR036567">
    <property type="entry name" value="RHF-like"/>
</dbReference>
<dbReference type="InterPro" id="IPR003489">
    <property type="entry name" value="RHF/RaiA"/>
</dbReference>
<dbReference type="InterPro" id="IPR032528">
    <property type="entry name" value="Ribosom_S30AE_C"/>
</dbReference>
<dbReference type="InterPro" id="IPR038416">
    <property type="entry name" value="Ribosom_S30AE_C_sf"/>
</dbReference>
<dbReference type="NCBIfam" id="TIGR00741">
    <property type="entry name" value="yfiA"/>
    <property type="match status" value="1"/>
</dbReference>
<dbReference type="PANTHER" id="PTHR33231">
    <property type="entry name" value="30S RIBOSOMAL PROTEIN"/>
    <property type="match status" value="1"/>
</dbReference>
<dbReference type="PANTHER" id="PTHR33231:SF1">
    <property type="entry name" value="30S RIBOSOMAL PROTEIN"/>
    <property type="match status" value="1"/>
</dbReference>
<dbReference type="Pfam" id="PF16321">
    <property type="entry name" value="Ribosom_S30AE_C"/>
    <property type="match status" value="1"/>
</dbReference>
<dbReference type="Pfam" id="PF02482">
    <property type="entry name" value="Ribosomal_S30AE"/>
    <property type="match status" value="1"/>
</dbReference>
<dbReference type="SUPFAM" id="SSF69754">
    <property type="entry name" value="Ribosome binding protein Y (YfiA homologue)"/>
    <property type="match status" value="1"/>
</dbReference>
<accession>Q2FIN9</accession>
<organism>
    <name type="scientific">Staphylococcus aureus (strain USA300)</name>
    <dbReference type="NCBI Taxonomy" id="367830"/>
    <lineage>
        <taxon>Bacteria</taxon>
        <taxon>Bacillati</taxon>
        <taxon>Bacillota</taxon>
        <taxon>Bacilli</taxon>
        <taxon>Bacillales</taxon>
        <taxon>Staphylococcaceae</taxon>
        <taxon>Staphylococcus</taxon>
    </lineage>
</organism>
<sequence length="190" mass="22213">MIRFEIHGDNLTITDAIRNYIEEKIGKLERYFNDVPNAVAHVKVKTYSNSATKIEVTIPLKNVTLRAEERNDDLYAGIDLINNKLERQVRKYKTRINRKSRDRGDQEVFVAELQEMQETQVDNDAYDDNEIEIIRSKEFSLKPMDSEEAVLQMNLLGHDFFVFTDRETDGTSIVYRRKDGKYGLIQTSEQ</sequence>
<reference key="1">
    <citation type="journal article" date="2006" name="Lancet">
        <title>Complete genome sequence of USA300, an epidemic clone of community-acquired meticillin-resistant Staphylococcus aureus.</title>
        <authorList>
            <person name="Diep B.A."/>
            <person name="Gill S.R."/>
            <person name="Chang R.F."/>
            <person name="Phan T.H."/>
            <person name="Chen J.H."/>
            <person name="Davidson M.G."/>
            <person name="Lin F."/>
            <person name="Lin J."/>
            <person name="Carleton H.A."/>
            <person name="Mongodin E.F."/>
            <person name="Sensabaugh G.F."/>
            <person name="Perdreau-Remington F."/>
        </authorList>
    </citation>
    <scope>NUCLEOTIDE SEQUENCE [LARGE SCALE GENOMIC DNA]</scope>
    <source>
        <strain>USA300</strain>
    </source>
</reference>
<reference key="2">
    <citation type="journal article" date="2016" name="Nucleic Acids Res.">
        <title>Ribosome hibernation factor promotes Staphylococcal survival and differentially represses translation.</title>
        <authorList>
            <person name="Basu A."/>
            <person name="Yap M.F."/>
        </authorList>
    </citation>
    <scope>FUNCTION</scope>
    <scope>SUBUNIT</scope>
    <scope>SUBCELLULAR LOCATION</scope>
    <scope>DOMAIN</scope>
    <scope>DISRUPTION PHENOTYPE</scope>
    <scope>MUTAGENESIS OF 27-LYS--ARG-30; ALA-51; ASN-71; 84-LYS--ARG-87 AND LEU-113</scope>
    <source>
        <strain>USA300</strain>
    </source>
</reference>
<gene>
    <name evidence="1 3" type="primary">hpf</name>
    <name type="ordered locus">SAUSA300_0736</name>
</gene>
<comment type="function">
    <text evidence="1 2">Required and sufficient for dimerization of active 70S ribosomes into 100S ribosomes. 110S ribosomes are probably translationally inactive and may serve as a reservoir of easily reactivated ribosomes when necessary in the cell. Also reduces the translation efficiency of a small number of genes. Unlike E.coli, 100S ribosomes are present during exponential growth and decrease during stationary phase. This strain produces 30% fewer 100S ribosomes than strain N315 and RN4200 under the same growth conditions (PubMed:27001516).</text>
</comment>
<comment type="subunit">
    <text evidence="2">Interacts with 100S ribosomes during exponential growth, as 100S ribosomes decrease (after 28 hours) also found associated with 30s and 50S subunits.</text>
</comment>
<comment type="subcellular location">
    <subcellularLocation>
        <location evidence="1 4">Cytoplasm</location>
    </subcellularLocation>
</comment>
<comment type="domain">
    <text evidence="2">The C-terminus (residues 101-190) is required for ribosome-binding; deletion of the last 42 residues partially decreases ribosome-binding.</text>
</comment>
<comment type="disruption phenotype">
    <text evidence="2">400-fold decreased cell survival in long-term growth, effects are more pronounced in minimal medium. No visible formation of 100S ribosomes, rapid degradation of ribosomes once cells have reached stationary phase.</text>
</comment>
<comment type="similarity">
    <text evidence="1">Belongs to the HPF/YfiA ribosome-associated protein family. Long HPF subfamily.</text>
</comment>
<proteinExistence type="evidence at protein level"/>